<dbReference type="EMBL" id="CP001095">
    <property type="protein sequence ID" value="ACJ53284.1"/>
    <property type="molecule type" value="Genomic_DNA"/>
</dbReference>
<dbReference type="EMBL" id="AP010889">
    <property type="protein sequence ID" value="BAJ69875.1"/>
    <property type="molecule type" value="Genomic_DNA"/>
</dbReference>
<dbReference type="RefSeq" id="WP_007053039.1">
    <property type="nucleotide sequence ID" value="NZ_JDTT01000039.1"/>
</dbReference>
<dbReference type="SMR" id="B7GNC8"/>
<dbReference type="GeneID" id="69578885"/>
<dbReference type="KEGG" id="bln:Blon_2225"/>
<dbReference type="KEGG" id="blon:BLIJ_2298"/>
<dbReference type="PATRIC" id="fig|391904.8.peg.2300"/>
<dbReference type="HOGENOM" id="CLU_061015_2_1_11"/>
<dbReference type="Proteomes" id="UP000001360">
    <property type="component" value="Chromosome"/>
</dbReference>
<dbReference type="GO" id="GO:1990904">
    <property type="term" value="C:ribonucleoprotein complex"/>
    <property type="evidence" value="ECO:0007669"/>
    <property type="project" value="UniProtKB-KW"/>
</dbReference>
<dbReference type="GO" id="GO:0005840">
    <property type="term" value="C:ribosome"/>
    <property type="evidence" value="ECO:0007669"/>
    <property type="project" value="UniProtKB-KW"/>
</dbReference>
<dbReference type="GO" id="GO:0019843">
    <property type="term" value="F:rRNA binding"/>
    <property type="evidence" value="ECO:0007669"/>
    <property type="project" value="UniProtKB-UniRule"/>
</dbReference>
<dbReference type="GO" id="GO:0003735">
    <property type="term" value="F:structural constituent of ribosome"/>
    <property type="evidence" value="ECO:0007669"/>
    <property type="project" value="InterPro"/>
</dbReference>
<dbReference type="GO" id="GO:0000049">
    <property type="term" value="F:tRNA binding"/>
    <property type="evidence" value="ECO:0007669"/>
    <property type="project" value="UniProtKB-UniRule"/>
</dbReference>
<dbReference type="GO" id="GO:0006412">
    <property type="term" value="P:translation"/>
    <property type="evidence" value="ECO:0007669"/>
    <property type="project" value="UniProtKB-UniRule"/>
</dbReference>
<dbReference type="FunFam" id="3.30.1440.10:FF:000001">
    <property type="entry name" value="50S ribosomal protein L5"/>
    <property type="match status" value="1"/>
</dbReference>
<dbReference type="Gene3D" id="3.30.1440.10">
    <property type="match status" value="1"/>
</dbReference>
<dbReference type="HAMAP" id="MF_01333_B">
    <property type="entry name" value="Ribosomal_uL5_B"/>
    <property type="match status" value="1"/>
</dbReference>
<dbReference type="InterPro" id="IPR002132">
    <property type="entry name" value="Ribosomal_uL5"/>
</dbReference>
<dbReference type="InterPro" id="IPR020930">
    <property type="entry name" value="Ribosomal_uL5_bac-type"/>
</dbReference>
<dbReference type="InterPro" id="IPR031309">
    <property type="entry name" value="Ribosomal_uL5_C"/>
</dbReference>
<dbReference type="InterPro" id="IPR022803">
    <property type="entry name" value="Ribosomal_uL5_dom_sf"/>
</dbReference>
<dbReference type="InterPro" id="IPR031310">
    <property type="entry name" value="Ribosomal_uL5_N"/>
</dbReference>
<dbReference type="NCBIfam" id="NF000585">
    <property type="entry name" value="PRK00010.1"/>
    <property type="match status" value="1"/>
</dbReference>
<dbReference type="PANTHER" id="PTHR11994">
    <property type="entry name" value="60S RIBOSOMAL PROTEIN L11-RELATED"/>
    <property type="match status" value="1"/>
</dbReference>
<dbReference type="Pfam" id="PF00281">
    <property type="entry name" value="Ribosomal_L5"/>
    <property type="match status" value="1"/>
</dbReference>
<dbReference type="Pfam" id="PF00673">
    <property type="entry name" value="Ribosomal_L5_C"/>
    <property type="match status" value="1"/>
</dbReference>
<dbReference type="PIRSF" id="PIRSF002161">
    <property type="entry name" value="Ribosomal_L5"/>
    <property type="match status" value="1"/>
</dbReference>
<dbReference type="SUPFAM" id="SSF55282">
    <property type="entry name" value="RL5-like"/>
    <property type="match status" value="1"/>
</dbReference>
<feature type="chain" id="PRO_1000166112" description="Large ribosomal subunit protein uL5">
    <location>
        <begin position="1"/>
        <end position="190"/>
    </location>
</feature>
<keyword id="KW-0687">Ribonucleoprotein</keyword>
<keyword id="KW-0689">Ribosomal protein</keyword>
<keyword id="KW-0694">RNA-binding</keyword>
<keyword id="KW-0699">rRNA-binding</keyword>
<keyword id="KW-0820">tRNA-binding</keyword>
<accession>B7GNC8</accession>
<accession>E8MN72</accession>
<proteinExistence type="inferred from homology"/>
<name>RL5_BIFLS</name>
<sequence>MTDTTVEAPATPRLKVKYNEQIIPELEKEFKYSNPMQVARVQKVVVSMGVGAAARDSKLIEGAVKDLTLITGQKPKITKAKKSVAQFHLREGQAIGAYVTLRGDRMWEFLDRLLTLALPRIRDFRGINGHQFDGQGNYNFGLTEQSMFHEIDPDSIDHVRGMDITVVTSTKDDKEAYALLKHLGFPFKEN</sequence>
<reference key="1">
    <citation type="journal article" date="2008" name="Proc. Natl. Acad. Sci. U.S.A.">
        <title>The genome sequence of Bifidobacterium longum subsp. infantis reveals adaptations for milk utilization within the infant microbiome.</title>
        <authorList>
            <person name="Sela D.A."/>
            <person name="Chapman J."/>
            <person name="Adeuya A."/>
            <person name="Kim J.H."/>
            <person name="Chen F."/>
            <person name="Whitehead T.R."/>
            <person name="Lapidus A."/>
            <person name="Rokhsar D.S."/>
            <person name="Lebrilla C.B."/>
            <person name="German J.B."/>
            <person name="Price N.P."/>
            <person name="Richardson P.M."/>
            <person name="Mills D.A."/>
        </authorList>
    </citation>
    <scope>NUCLEOTIDE SEQUENCE [LARGE SCALE GENOMIC DNA]</scope>
    <source>
        <strain>ATCC 15697 / DSM 20088 / JCM 1222 / NCTC 11817 / S12</strain>
    </source>
</reference>
<reference key="2">
    <citation type="journal article" date="2011" name="Nature">
        <title>Bifidobacteria can protect from enteropathogenic infection through production of acetate.</title>
        <authorList>
            <person name="Fukuda S."/>
            <person name="Toh H."/>
            <person name="Hase K."/>
            <person name="Oshima K."/>
            <person name="Nakanishi Y."/>
            <person name="Yoshimura K."/>
            <person name="Tobe T."/>
            <person name="Clarke J.M."/>
            <person name="Topping D.L."/>
            <person name="Suzuki T."/>
            <person name="Taylor T.D."/>
            <person name="Itoh K."/>
            <person name="Kikuchi J."/>
            <person name="Morita H."/>
            <person name="Hattori M."/>
            <person name="Ohno H."/>
        </authorList>
    </citation>
    <scope>NUCLEOTIDE SEQUENCE [LARGE SCALE GENOMIC DNA]</scope>
    <source>
        <strain>ATCC 15697 / DSM 20088 / JCM 1222 / NCTC 11817 / S12</strain>
    </source>
</reference>
<gene>
    <name evidence="1" type="primary">rplE</name>
    <name type="ordered locus">Blon_2225</name>
    <name type="ordered locus">BLIJ_2298</name>
</gene>
<evidence type="ECO:0000255" key="1">
    <source>
        <dbReference type="HAMAP-Rule" id="MF_01333"/>
    </source>
</evidence>
<evidence type="ECO:0000305" key="2"/>
<organism>
    <name type="scientific">Bifidobacterium longum subsp. infantis (strain ATCC 15697 / DSM 20088 / JCM 1222 / NCTC 11817 / S12)</name>
    <dbReference type="NCBI Taxonomy" id="391904"/>
    <lineage>
        <taxon>Bacteria</taxon>
        <taxon>Bacillati</taxon>
        <taxon>Actinomycetota</taxon>
        <taxon>Actinomycetes</taxon>
        <taxon>Bifidobacteriales</taxon>
        <taxon>Bifidobacteriaceae</taxon>
        <taxon>Bifidobacterium</taxon>
    </lineage>
</organism>
<protein>
    <recommendedName>
        <fullName evidence="1">Large ribosomal subunit protein uL5</fullName>
    </recommendedName>
    <alternativeName>
        <fullName evidence="2">50S ribosomal protein L5</fullName>
    </alternativeName>
</protein>
<comment type="function">
    <text evidence="1">This is one of the proteins that bind and probably mediate the attachment of the 5S RNA into the large ribosomal subunit, where it forms part of the central protuberance. In the 70S ribosome it contacts protein S13 of the 30S subunit (bridge B1b), connecting the 2 subunits; this bridge is implicated in subunit movement. Contacts the P site tRNA; the 5S rRNA and some of its associated proteins might help stabilize positioning of ribosome-bound tRNAs.</text>
</comment>
<comment type="subunit">
    <text evidence="1">Part of the 50S ribosomal subunit; part of the 5S rRNA/L5/L18/L25 subcomplex. Contacts the 5S rRNA and the P site tRNA. Forms a bridge to the 30S subunit in the 70S ribosome.</text>
</comment>
<comment type="similarity">
    <text evidence="1">Belongs to the universal ribosomal protein uL5 family.</text>
</comment>